<name>ATPD_ECOSE</name>
<feature type="chain" id="PRO_0000370973" description="ATP synthase subunit delta">
    <location>
        <begin position="1"/>
        <end position="177"/>
    </location>
</feature>
<keyword id="KW-0066">ATP synthesis</keyword>
<keyword id="KW-0997">Cell inner membrane</keyword>
<keyword id="KW-1003">Cell membrane</keyword>
<keyword id="KW-0139">CF(1)</keyword>
<keyword id="KW-0375">Hydrogen ion transport</keyword>
<keyword id="KW-0406">Ion transport</keyword>
<keyword id="KW-0472">Membrane</keyword>
<keyword id="KW-0813">Transport</keyword>
<protein>
    <recommendedName>
        <fullName evidence="1">ATP synthase subunit delta</fullName>
    </recommendedName>
    <alternativeName>
        <fullName evidence="1">ATP synthase F(1) sector subunit delta</fullName>
    </alternativeName>
    <alternativeName>
        <fullName evidence="1">F-type ATPase subunit delta</fullName>
        <shortName evidence="1">F-ATPase subunit delta</shortName>
    </alternativeName>
</protein>
<sequence>MSEFITVARPYAKAAFDFAVEHQSVERWQDMLAFAAEVTKNEQMAELLSGALAPETLAESFIAVCGEQLDENGQNLIRVMAENGRLNALPDVLEQFIHLRAVSEATAEVDVISAAALSEQQLAKISAAMEKRLSRKVKLNCKIDKSVMAGVIIRAGDMVIDGSVRGRLERLADVLQS</sequence>
<evidence type="ECO:0000255" key="1">
    <source>
        <dbReference type="HAMAP-Rule" id="MF_01416"/>
    </source>
</evidence>
<accession>B6I3X2</accession>
<organism>
    <name type="scientific">Escherichia coli (strain SE11)</name>
    <dbReference type="NCBI Taxonomy" id="409438"/>
    <lineage>
        <taxon>Bacteria</taxon>
        <taxon>Pseudomonadati</taxon>
        <taxon>Pseudomonadota</taxon>
        <taxon>Gammaproteobacteria</taxon>
        <taxon>Enterobacterales</taxon>
        <taxon>Enterobacteriaceae</taxon>
        <taxon>Escherichia</taxon>
    </lineage>
</organism>
<proteinExistence type="inferred from homology"/>
<gene>
    <name evidence="1" type="primary">atpH</name>
    <name type="ordered locus">ECSE_4025</name>
</gene>
<reference key="1">
    <citation type="journal article" date="2008" name="DNA Res.">
        <title>Complete genome sequence and comparative analysis of the wild-type commensal Escherichia coli strain SE11 isolated from a healthy adult.</title>
        <authorList>
            <person name="Oshima K."/>
            <person name="Toh H."/>
            <person name="Ogura Y."/>
            <person name="Sasamoto H."/>
            <person name="Morita H."/>
            <person name="Park S.-H."/>
            <person name="Ooka T."/>
            <person name="Iyoda S."/>
            <person name="Taylor T.D."/>
            <person name="Hayashi T."/>
            <person name="Itoh K."/>
            <person name="Hattori M."/>
        </authorList>
    </citation>
    <scope>NUCLEOTIDE SEQUENCE [LARGE SCALE GENOMIC DNA]</scope>
    <source>
        <strain>SE11</strain>
    </source>
</reference>
<comment type="function">
    <text evidence="1">F(1)F(0) ATP synthase produces ATP from ADP in the presence of a proton or sodium gradient. F-type ATPases consist of two structural domains, F(1) containing the extramembraneous catalytic core and F(0) containing the membrane proton channel, linked together by a central stalk and a peripheral stalk. During catalysis, ATP synthesis in the catalytic domain of F(1) is coupled via a rotary mechanism of the central stalk subunits to proton translocation.</text>
</comment>
<comment type="function">
    <text evidence="1">This protein is part of the stalk that links CF(0) to CF(1). It either transmits conformational changes from CF(0) to CF(1) or is implicated in proton conduction.</text>
</comment>
<comment type="subunit">
    <text evidence="1">F-type ATPases have 2 components, F(1) - the catalytic core - and F(0) - the membrane proton channel. F(1) has five subunits: alpha(3), beta(3), gamma(1), delta(1), epsilon(1). F(0) has three main subunits: a(1), b(2) and c(10-14). The alpha and beta chains form an alternating ring which encloses part of the gamma chain. F(1) is attached to F(0) by a central stalk formed by the gamma and epsilon chains, while a peripheral stalk is formed by the delta and b chains.</text>
</comment>
<comment type="subcellular location">
    <subcellularLocation>
        <location evidence="1">Cell inner membrane</location>
        <topology evidence="1">Peripheral membrane protein</topology>
    </subcellularLocation>
</comment>
<comment type="similarity">
    <text evidence="1">Belongs to the ATPase delta chain family.</text>
</comment>
<dbReference type="EMBL" id="AP009240">
    <property type="protein sequence ID" value="BAG79549.1"/>
    <property type="molecule type" value="Genomic_DNA"/>
</dbReference>
<dbReference type="RefSeq" id="WP_001288587.1">
    <property type="nucleotide sequence ID" value="NC_011415.1"/>
</dbReference>
<dbReference type="SMR" id="B6I3X2"/>
<dbReference type="GeneID" id="93778232"/>
<dbReference type="KEGG" id="ecy:ECSE_4025"/>
<dbReference type="HOGENOM" id="CLU_085114_3_0_6"/>
<dbReference type="Proteomes" id="UP000008199">
    <property type="component" value="Chromosome"/>
</dbReference>
<dbReference type="GO" id="GO:0005886">
    <property type="term" value="C:plasma membrane"/>
    <property type="evidence" value="ECO:0007669"/>
    <property type="project" value="UniProtKB-SubCell"/>
</dbReference>
<dbReference type="GO" id="GO:0045259">
    <property type="term" value="C:proton-transporting ATP synthase complex"/>
    <property type="evidence" value="ECO:0007669"/>
    <property type="project" value="UniProtKB-KW"/>
</dbReference>
<dbReference type="GO" id="GO:0046933">
    <property type="term" value="F:proton-transporting ATP synthase activity, rotational mechanism"/>
    <property type="evidence" value="ECO:0007669"/>
    <property type="project" value="UniProtKB-UniRule"/>
</dbReference>
<dbReference type="FunFam" id="1.10.520.20:FF:000001">
    <property type="entry name" value="ATP synthase subunit delta"/>
    <property type="match status" value="1"/>
</dbReference>
<dbReference type="Gene3D" id="1.10.520.20">
    <property type="entry name" value="N-terminal domain of the delta subunit of the F1F0-ATP synthase"/>
    <property type="match status" value="1"/>
</dbReference>
<dbReference type="HAMAP" id="MF_01416">
    <property type="entry name" value="ATP_synth_delta_bact"/>
    <property type="match status" value="1"/>
</dbReference>
<dbReference type="InterPro" id="IPR026015">
    <property type="entry name" value="ATP_synth_OSCP/delta_N_sf"/>
</dbReference>
<dbReference type="InterPro" id="IPR020781">
    <property type="entry name" value="ATPase_OSCP/d_CS"/>
</dbReference>
<dbReference type="InterPro" id="IPR000711">
    <property type="entry name" value="ATPase_OSCP/dsu"/>
</dbReference>
<dbReference type="NCBIfam" id="TIGR01145">
    <property type="entry name" value="ATP_synt_delta"/>
    <property type="match status" value="1"/>
</dbReference>
<dbReference type="NCBIfam" id="NF004402">
    <property type="entry name" value="PRK05758.2-2"/>
    <property type="match status" value="1"/>
</dbReference>
<dbReference type="NCBIfam" id="NF004404">
    <property type="entry name" value="PRK05758.2-5"/>
    <property type="match status" value="1"/>
</dbReference>
<dbReference type="PANTHER" id="PTHR11910">
    <property type="entry name" value="ATP SYNTHASE DELTA CHAIN"/>
    <property type="match status" value="1"/>
</dbReference>
<dbReference type="Pfam" id="PF00213">
    <property type="entry name" value="OSCP"/>
    <property type="match status" value="1"/>
</dbReference>
<dbReference type="PRINTS" id="PR00125">
    <property type="entry name" value="ATPASEDELTA"/>
</dbReference>
<dbReference type="SUPFAM" id="SSF47928">
    <property type="entry name" value="N-terminal domain of the delta subunit of the F1F0-ATP synthase"/>
    <property type="match status" value="1"/>
</dbReference>
<dbReference type="PROSITE" id="PS00389">
    <property type="entry name" value="ATPASE_DELTA"/>
    <property type="match status" value="1"/>
</dbReference>